<protein>
    <recommendedName>
        <fullName>Tubulin alpha-3 chain</fullName>
        <ecNumber evidence="2">3.6.5.-</ecNumber>
    </recommendedName>
    <alternativeName>
        <fullName>Alpha-3-tubulin</fullName>
    </alternativeName>
</protein>
<name>TBA3_MAIZE</name>
<accession>P22275</accession>
<dbReference type="EC" id="3.6.5.-" evidence="2"/>
<dbReference type="EMBL" id="M60171">
    <property type="protein sequence ID" value="AAA33518.1"/>
    <property type="molecule type" value="Genomic_DNA"/>
</dbReference>
<dbReference type="EMBL" id="X63176">
    <property type="protein sequence ID" value="CAA44861.1"/>
    <property type="molecule type" value="mRNA"/>
</dbReference>
<dbReference type="PIR" id="JN0105">
    <property type="entry name" value="JN0105"/>
</dbReference>
<dbReference type="RefSeq" id="NP_001105440.1">
    <property type="nucleotide sequence ID" value="NM_001111970.1"/>
</dbReference>
<dbReference type="SMR" id="P22275"/>
<dbReference type="STRING" id="4577.P22275"/>
<dbReference type="PaxDb" id="4577-AC195340.3_FGP001"/>
<dbReference type="EnsemblPlants" id="Zm00001eb213760_T001">
    <property type="protein sequence ID" value="Zm00001eb213760_P001"/>
    <property type="gene ID" value="Zm00001eb213760"/>
</dbReference>
<dbReference type="GeneID" id="542395"/>
<dbReference type="Gramene" id="Zm00001eb213760_T001">
    <property type="protein sequence ID" value="Zm00001eb213760_P001"/>
    <property type="gene ID" value="Zm00001eb213760"/>
</dbReference>
<dbReference type="KEGG" id="zma:542395"/>
<dbReference type="MaizeGDB" id="17141"/>
<dbReference type="eggNOG" id="KOG1376">
    <property type="taxonomic scope" value="Eukaryota"/>
</dbReference>
<dbReference type="HOGENOM" id="CLU_015718_0_0_1"/>
<dbReference type="InParanoid" id="P22275"/>
<dbReference type="OMA" id="DKSAGHY"/>
<dbReference type="OrthoDB" id="1853138at2759"/>
<dbReference type="Proteomes" id="UP000007305">
    <property type="component" value="Chromosome 5"/>
</dbReference>
<dbReference type="ExpressionAtlas" id="P22275">
    <property type="expression patterns" value="baseline and differential"/>
</dbReference>
<dbReference type="GO" id="GO:0005737">
    <property type="term" value="C:cytoplasm"/>
    <property type="evidence" value="ECO:0000318"/>
    <property type="project" value="GO_Central"/>
</dbReference>
<dbReference type="GO" id="GO:0005874">
    <property type="term" value="C:microtubule"/>
    <property type="evidence" value="ECO:0000318"/>
    <property type="project" value="GO_Central"/>
</dbReference>
<dbReference type="GO" id="GO:0005525">
    <property type="term" value="F:GTP binding"/>
    <property type="evidence" value="ECO:0000318"/>
    <property type="project" value="GO_Central"/>
</dbReference>
<dbReference type="GO" id="GO:0016787">
    <property type="term" value="F:hydrolase activity"/>
    <property type="evidence" value="ECO:0007669"/>
    <property type="project" value="UniProtKB-KW"/>
</dbReference>
<dbReference type="GO" id="GO:0046872">
    <property type="term" value="F:metal ion binding"/>
    <property type="evidence" value="ECO:0007669"/>
    <property type="project" value="UniProtKB-KW"/>
</dbReference>
<dbReference type="GO" id="GO:0005200">
    <property type="term" value="F:structural constituent of cytoskeleton"/>
    <property type="evidence" value="ECO:0000318"/>
    <property type="project" value="GO_Central"/>
</dbReference>
<dbReference type="GO" id="GO:0000226">
    <property type="term" value="P:microtubule cytoskeleton organization"/>
    <property type="evidence" value="ECO:0000318"/>
    <property type="project" value="GO_Central"/>
</dbReference>
<dbReference type="GO" id="GO:0000278">
    <property type="term" value="P:mitotic cell cycle"/>
    <property type="evidence" value="ECO:0000318"/>
    <property type="project" value="GO_Central"/>
</dbReference>
<dbReference type="CDD" id="cd02186">
    <property type="entry name" value="alpha_tubulin"/>
    <property type="match status" value="1"/>
</dbReference>
<dbReference type="FunFam" id="1.10.287.600:FF:000001">
    <property type="entry name" value="Tubulin alpha chain"/>
    <property type="match status" value="1"/>
</dbReference>
<dbReference type="FunFam" id="3.30.1330.20:FF:000001">
    <property type="entry name" value="Tubulin alpha chain"/>
    <property type="match status" value="1"/>
</dbReference>
<dbReference type="FunFam" id="3.40.50.1440:FF:000004">
    <property type="entry name" value="Tubulin alpha chain"/>
    <property type="match status" value="1"/>
</dbReference>
<dbReference type="Gene3D" id="1.10.287.600">
    <property type="entry name" value="Helix hairpin bin"/>
    <property type="match status" value="1"/>
</dbReference>
<dbReference type="Gene3D" id="3.30.1330.20">
    <property type="entry name" value="Tubulin/FtsZ, C-terminal domain"/>
    <property type="match status" value="1"/>
</dbReference>
<dbReference type="Gene3D" id="3.40.50.1440">
    <property type="entry name" value="Tubulin/FtsZ, GTPase domain"/>
    <property type="match status" value="1"/>
</dbReference>
<dbReference type="InterPro" id="IPR002452">
    <property type="entry name" value="Alpha_tubulin"/>
</dbReference>
<dbReference type="InterPro" id="IPR008280">
    <property type="entry name" value="Tub_FtsZ_C"/>
</dbReference>
<dbReference type="InterPro" id="IPR000217">
    <property type="entry name" value="Tubulin"/>
</dbReference>
<dbReference type="InterPro" id="IPR037103">
    <property type="entry name" value="Tubulin/FtsZ-like_C"/>
</dbReference>
<dbReference type="InterPro" id="IPR018316">
    <property type="entry name" value="Tubulin/FtsZ_2-layer-sand-dom"/>
</dbReference>
<dbReference type="InterPro" id="IPR036525">
    <property type="entry name" value="Tubulin/FtsZ_GTPase_sf"/>
</dbReference>
<dbReference type="InterPro" id="IPR023123">
    <property type="entry name" value="Tubulin_C"/>
</dbReference>
<dbReference type="InterPro" id="IPR017975">
    <property type="entry name" value="Tubulin_CS"/>
</dbReference>
<dbReference type="InterPro" id="IPR003008">
    <property type="entry name" value="Tubulin_FtsZ_GTPase"/>
</dbReference>
<dbReference type="PANTHER" id="PTHR11588">
    <property type="entry name" value="TUBULIN"/>
    <property type="match status" value="1"/>
</dbReference>
<dbReference type="Pfam" id="PF00091">
    <property type="entry name" value="Tubulin"/>
    <property type="match status" value="1"/>
</dbReference>
<dbReference type="Pfam" id="PF03953">
    <property type="entry name" value="Tubulin_C"/>
    <property type="match status" value="1"/>
</dbReference>
<dbReference type="PRINTS" id="PR01162">
    <property type="entry name" value="ALPHATUBULIN"/>
</dbReference>
<dbReference type="PRINTS" id="PR01161">
    <property type="entry name" value="TUBULIN"/>
</dbReference>
<dbReference type="SMART" id="SM00864">
    <property type="entry name" value="Tubulin"/>
    <property type="match status" value="1"/>
</dbReference>
<dbReference type="SMART" id="SM00865">
    <property type="entry name" value="Tubulin_C"/>
    <property type="match status" value="1"/>
</dbReference>
<dbReference type="SUPFAM" id="SSF55307">
    <property type="entry name" value="Tubulin C-terminal domain-like"/>
    <property type="match status" value="1"/>
</dbReference>
<dbReference type="SUPFAM" id="SSF52490">
    <property type="entry name" value="Tubulin nucleotide-binding domain-like"/>
    <property type="match status" value="1"/>
</dbReference>
<dbReference type="PROSITE" id="PS00227">
    <property type="entry name" value="TUBULIN"/>
    <property type="match status" value="1"/>
</dbReference>
<keyword id="KW-0007">Acetylation</keyword>
<keyword id="KW-0963">Cytoplasm</keyword>
<keyword id="KW-0206">Cytoskeleton</keyword>
<keyword id="KW-0342">GTP-binding</keyword>
<keyword id="KW-0378">Hydrolase</keyword>
<keyword id="KW-0460">Magnesium</keyword>
<keyword id="KW-0479">Metal-binding</keyword>
<keyword id="KW-0493">Microtubule</keyword>
<keyword id="KW-0547">Nucleotide-binding</keyword>
<keyword id="KW-1185">Reference proteome</keyword>
<feature type="chain" id="PRO_0000048190" description="Tubulin alpha-3 chain">
    <location>
        <begin position="1"/>
        <end position="450"/>
    </location>
</feature>
<feature type="active site" evidence="2">
    <location>
        <position position="254"/>
    </location>
</feature>
<feature type="binding site" evidence="2">
    <location>
        <position position="11"/>
    </location>
    <ligand>
        <name>GTP</name>
        <dbReference type="ChEBI" id="CHEBI:37565"/>
    </ligand>
</feature>
<feature type="binding site" evidence="2">
    <location>
        <position position="71"/>
    </location>
    <ligand>
        <name>GTP</name>
        <dbReference type="ChEBI" id="CHEBI:37565"/>
    </ligand>
</feature>
<feature type="binding site" evidence="2">
    <location>
        <position position="71"/>
    </location>
    <ligand>
        <name>Mg(2+)</name>
        <dbReference type="ChEBI" id="CHEBI:18420"/>
    </ligand>
</feature>
<feature type="binding site" evidence="2">
    <location>
        <position position="144"/>
    </location>
    <ligand>
        <name>GTP</name>
        <dbReference type="ChEBI" id="CHEBI:37565"/>
    </ligand>
</feature>
<feature type="binding site" evidence="2">
    <location>
        <position position="145"/>
    </location>
    <ligand>
        <name>GTP</name>
        <dbReference type="ChEBI" id="CHEBI:37565"/>
    </ligand>
</feature>
<feature type="binding site" evidence="2">
    <location>
        <position position="179"/>
    </location>
    <ligand>
        <name>GTP</name>
        <dbReference type="ChEBI" id="CHEBI:37565"/>
    </ligand>
</feature>
<feature type="binding site" evidence="2">
    <location>
        <position position="206"/>
    </location>
    <ligand>
        <name>GTP</name>
        <dbReference type="ChEBI" id="CHEBI:37565"/>
    </ligand>
</feature>
<feature type="binding site" evidence="2">
    <location>
        <position position="228"/>
    </location>
    <ligand>
        <name>GTP</name>
        <dbReference type="ChEBI" id="CHEBI:37565"/>
    </ligand>
</feature>
<feature type="site" description="Involved in polymerization">
    <location>
        <position position="450"/>
    </location>
</feature>
<feature type="modified residue" description="N6-acetyllysine" evidence="1">
    <location>
        <position position="40"/>
    </location>
</feature>
<organism>
    <name type="scientific">Zea mays</name>
    <name type="common">Maize</name>
    <dbReference type="NCBI Taxonomy" id="4577"/>
    <lineage>
        <taxon>Eukaryota</taxon>
        <taxon>Viridiplantae</taxon>
        <taxon>Streptophyta</taxon>
        <taxon>Embryophyta</taxon>
        <taxon>Tracheophyta</taxon>
        <taxon>Spermatophyta</taxon>
        <taxon>Magnoliopsida</taxon>
        <taxon>Liliopsida</taxon>
        <taxon>Poales</taxon>
        <taxon>Poaceae</taxon>
        <taxon>PACMAD clade</taxon>
        <taxon>Panicoideae</taxon>
        <taxon>Andropogonodae</taxon>
        <taxon>Andropogoneae</taxon>
        <taxon>Tripsacinae</taxon>
        <taxon>Zea</taxon>
    </lineage>
</organism>
<gene>
    <name type="primary">TUBA3</name>
    <name type="synonym">TUA3</name>
</gene>
<comment type="function">
    <text>Tubulin is the major constituent of microtubules, a cylinder consisting of laterally associated linear protofilaments composed of alpha- and beta-tubulin heterodimers. Microtubules grow by the addition of GTP-tubulin dimers to the microtubule end, where a stabilizing cap forms. Below the cap, tubulin dimers are in GDP-bound state, owing to GTPase activity of alpha-tubulin.</text>
</comment>
<comment type="catalytic activity">
    <reaction evidence="2">
        <text>GTP + H2O = GDP + phosphate + H(+)</text>
        <dbReference type="Rhea" id="RHEA:19669"/>
        <dbReference type="ChEBI" id="CHEBI:15377"/>
        <dbReference type="ChEBI" id="CHEBI:15378"/>
        <dbReference type="ChEBI" id="CHEBI:37565"/>
        <dbReference type="ChEBI" id="CHEBI:43474"/>
        <dbReference type="ChEBI" id="CHEBI:58189"/>
    </reaction>
    <physiologicalReaction direction="left-to-right" evidence="2">
        <dbReference type="Rhea" id="RHEA:19670"/>
    </physiologicalReaction>
</comment>
<comment type="cofactor">
    <cofactor evidence="2">
        <name>Mg(2+)</name>
        <dbReference type="ChEBI" id="CHEBI:18420"/>
    </cofactor>
</comment>
<comment type="subunit">
    <text>Dimer of alpha and beta chains. A typical microtubule is a hollow water-filled tube with an outer diameter of 25 nm and an inner diameter of 15 nM. Alpha-beta heterodimers associate head-to-tail to form protofilaments running lengthwise along the microtubule wall with the beta-tubulin subunit facing the microtubule plus end conferring a structural polarity. Microtubules usually have 13 protofilaments but different protofilament numbers can be found in some organisms and specialized cells.</text>
</comment>
<comment type="subcellular location">
    <subcellularLocation>
        <location>Cytoplasm</location>
        <location>Cytoskeleton</location>
    </subcellularLocation>
</comment>
<comment type="PTM">
    <text evidence="1">Undergoes a tyrosination/detyrosination cycle, the cyclic removal and re-addition of a C-terminal tyrosine residue by the enzymes tubulin tyrosine carboxypeptidase (TTCP) and tubulin tyrosine ligase (TTL), respectively.</text>
</comment>
<comment type="PTM">
    <text evidence="1">Acetylation of alpha chains at Lys-40 stabilizes microtubules and affects affinity and processivity of microtubule motors. This modification has a role in multiple cellular functions, ranging from cell motility, cell cycle progression or cell differentiation to intracellular trafficking and signaling (By similarity).</text>
</comment>
<comment type="similarity">
    <text evidence="3">Belongs to the tubulin family.</text>
</comment>
<reference key="1">
    <citation type="journal article" date="1990" name="Gene">
        <title>The Tub alpha 3 gene from Zea mays: structure and expression in dividing plant tissues.</title>
        <authorList>
            <person name="Montoliu L."/>
            <person name="Puigdomenech P."/>
            <person name="Rigau J."/>
        </authorList>
    </citation>
    <scope>NUCLEOTIDE SEQUENCE</scope>
</reference>
<reference key="2">
    <citation type="journal article" date="1992" name="J. Mol. Biol.">
        <title>Alpha-tubulin gene family of maize (Zea mays L.). Evidence for two ancient alpha-tubulin genes in plants.</title>
        <authorList>
            <person name="Villemur R."/>
            <person name="Joyce C.M."/>
            <person name="Haas N.A."/>
            <person name="Goddard R.H."/>
            <person name="Kopczak S.D."/>
            <person name="Hussey P.J."/>
            <person name="Snustad D.P."/>
            <person name="Silflow C.D."/>
        </authorList>
    </citation>
    <scope>NUCLEOTIDE SEQUENCE [MRNA]</scope>
    <source>
        <strain>cv. B73</strain>
        <tissue>Shoot</tissue>
    </source>
</reference>
<sequence length="450" mass="49561">MRECISVHIGQAGIQVGNACWELYCLEHGIQPDGQVPGDKTAGHHDDAFSTFFSQTGAGKHVPRAIFVDLEPTVIDEVRTGTYRQLFHPEQLISGKEDAANNFARGHYTIGKEIVDLCLDRIRKLADNCTGLQGFLVFNAVGGGTGSGLGSLLLERLSVEYGKKSKLGFTVYPSPQVSTSVVEPYNSVLSTHSLLEHTDVSILLDNEAIYDICRRSLDIERPNYSNLNRLVSQVISSLTASLRFDGALNVDVNEFQTNLVPYPRIHFMLSSYAPVISSAKAFHEQLSVAEITSSAFEPASMMVKCDPRHGKYMACCLMYRGDVVPKDVNAAVATIKTKRTIQFVDWCPTGFKCGINYQAPTVVPGADLAKVQRAVCMISNSTSVVEVFSRINSKFDLMYAKRAFVHWYVGEGMEEGEFSEAREDLAALEKDYEEVAAEGGSDDGDEEEEY</sequence>
<proteinExistence type="evidence at transcript level"/>
<evidence type="ECO:0000250" key="1"/>
<evidence type="ECO:0000250" key="2">
    <source>
        <dbReference type="UniProtKB" id="P68363"/>
    </source>
</evidence>
<evidence type="ECO:0000305" key="3"/>